<comment type="function">
    <text evidence="1">Catalyzes the conversion of dethiobiotin (DTB) to biotin by the insertion of a sulfur atom into dethiobiotin via a radical-based mechanism.</text>
</comment>
<comment type="catalytic activity">
    <reaction evidence="1">
        <text>(4R,5S)-dethiobiotin + (sulfur carrier)-SH + 2 reduced [2Fe-2S]-[ferredoxin] + 2 S-adenosyl-L-methionine = (sulfur carrier)-H + biotin + 2 5'-deoxyadenosine + 2 L-methionine + 2 oxidized [2Fe-2S]-[ferredoxin]</text>
        <dbReference type="Rhea" id="RHEA:22060"/>
        <dbReference type="Rhea" id="RHEA-COMP:10000"/>
        <dbReference type="Rhea" id="RHEA-COMP:10001"/>
        <dbReference type="Rhea" id="RHEA-COMP:14737"/>
        <dbReference type="Rhea" id="RHEA-COMP:14739"/>
        <dbReference type="ChEBI" id="CHEBI:17319"/>
        <dbReference type="ChEBI" id="CHEBI:29917"/>
        <dbReference type="ChEBI" id="CHEBI:33737"/>
        <dbReference type="ChEBI" id="CHEBI:33738"/>
        <dbReference type="ChEBI" id="CHEBI:57586"/>
        <dbReference type="ChEBI" id="CHEBI:57844"/>
        <dbReference type="ChEBI" id="CHEBI:59789"/>
        <dbReference type="ChEBI" id="CHEBI:64428"/>
        <dbReference type="ChEBI" id="CHEBI:149473"/>
        <dbReference type="EC" id="2.8.1.6"/>
    </reaction>
</comment>
<comment type="cofactor">
    <cofactor evidence="1">
        <name>[4Fe-4S] cluster</name>
        <dbReference type="ChEBI" id="CHEBI:49883"/>
    </cofactor>
    <text evidence="1">Binds 1 [4Fe-4S] cluster. The cluster is coordinated with 3 cysteines and an exchangeable S-adenosyl-L-methionine.</text>
</comment>
<comment type="cofactor">
    <cofactor evidence="1">
        <name>[2Fe-2S] cluster</name>
        <dbReference type="ChEBI" id="CHEBI:190135"/>
    </cofactor>
    <text evidence="1">Binds 1 [2Fe-2S] cluster. The cluster is coordinated with 3 cysteines and 1 arginine.</text>
</comment>
<comment type="pathway">
    <text evidence="1">Cofactor biosynthesis; biotin biosynthesis; biotin from 7,8-diaminononanoate: step 2/2.</text>
</comment>
<comment type="subunit">
    <text evidence="1">Homodimer.</text>
</comment>
<comment type="similarity">
    <text evidence="1">Belongs to the radical SAM superfamily. Biotin synthase family.</text>
</comment>
<gene>
    <name evidence="1" type="primary">bioB</name>
    <name type="ordered locus">SYNPCC7002_A0309</name>
</gene>
<accession>B1XNE1</accession>
<sequence>MVQVPIKPTPQTPAPTTAIPNGPALEAWLNDWAQRIINGDRLTRTEALRLTAITGPENILKLCAAADLIRHECCGNTVDLCSIVNVKSGSCSENCSFCSQSAHHPGEDSPVYGLKTAEEIIEQAKAAEAAGAKRFCLVSQGRGIKYNSPRDTEFEQILETVRRIQAETAIKPCCALGEVTPEQAQQLREAGVTRYNHNLEASENFFPDIVTTHSWQDRVETIKNLKAAGIQACSGGIMGLGESWEDRVDLAIALRDLEVESVPLNLLNPRQGTPLGSNDRLDVYEALKCMAIFRFILPEQIIRYAGGREAVMGELQHLGLKAGINAMLIGHYLTTMGQPPEQDQAMLKSLGLQGGEAPIPGQYSAAQ</sequence>
<feature type="chain" id="PRO_0000381675" description="Biotin synthase">
    <location>
        <begin position="1"/>
        <end position="367"/>
    </location>
</feature>
<feature type="domain" description="Radical SAM core" evidence="2">
    <location>
        <begin position="73"/>
        <end position="308"/>
    </location>
</feature>
<feature type="binding site" evidence="1">
    <location>
        <position position="91"/>
    </location>
    <ligand>
        <name>[4Fe-4S] cluster</name>
        <dbReference type="ChEBI" id="CHEBI:49883"/>
        <note>4Fe-4S-S-AdoMet</note>
    </ligand>
</feature>
<feature type="binding site" evidence="1">
    <location>
        <position position="95"/>
    </location>
    <ligand>
        <name>[4Fe-4S] cluster</name>
        <dbReference type="ChEBI" id="CHEBI:49883"/>
        <note>4Fe-4S-S-AdoMet</note>
    </ligand>
</feature>
<feature type="binding site" evidence="1">
    <location>
        <position position="98"/>
    </location>
    <ligand>
        <name>[4Fe-4S] cluster</name>
        <dbReference type="ChEBI" id="CHEBI:49883"/>
        <note>4Fe-4S-S-AdoMet</note>
    </ligand>
</feature>
<feature type="binding site" evidence="1">
    <location>
        <position position="136"/>
    </location>
    <ligand>
        <name>[2Fe-2S] cluster</name>
        <dbReference type="ChEBI" id="CHEBI:190135"/>
    </ligand>
</feature>
<feature type="binding site" evidence="1">
    <location>
        <position position="173"/>
    </location>
    <ligand>
        <name>[2Fe-2S] cluster</name>
        <dbReference type="ChEBI" id="CHEBI:190135"/>
    </ligand>
</feature>
<feature type="binding site" evidence="1">
    <location>
        <position position="233"/>
    </location>
    <ligand>
        <name>[2Fe-2S] cluster</name>
        <dbReference type="ChEBI" id="CHEBI:190135"/>
    </ligand>
</feature>
<feature type="binding site" evidence="1">
    <location>
        <position position="303"/>
    </location>
    <ligand>
        <name>[2Fe-2S] cluster</name>
        <dbReference type="ChEBI" id="CHEBI:190135"/>
    </ligand>
</feature>
<organism>
    <name type="scientific">Picosynechococcus sp. (strain ATCC 27264 / PCC 7002 / PR-6)</name>
    <name type="common">Agmenellum quadruplicatum</name>
    <dbReference type="NCBI Taxonomy" id="32049"/>
    <lineage>
        <taxon>Bacteria</taxon>
        <taxon>Bacillati</taxon>
        <taxon>Cyanobacteriota</taxon>
        <taxon>Cyanophyceae</taxon>
        <taxon>Oscillatoriophycideae</taxon>
        <taxon>Chroococcales</taxon>
        <taxon>Geminocystaceae</taxon>
        <taxon>Picosynechococcus</taxon>
    </lineage>
</organism>
<name>BIOB_PICP2</name>
<dbReference type="EC" id="2.8.1.6" evidence="1"/>
<dbReference type="EMBL" id="CP000951">
    <property type="protein sequence ID" value="ACA98319.1"/>
    <property type="molecule type" value="Genomic_DNA"/>
</dbReference>
<dbReference type="SMR" id="B1XNE1"/>
<dbReference type="STRING" id="32049.SYNPCC7002_A0309"/>
<dbReference type="KEGG" id="syp:SYNPCC7002_A0309"/>
<dbReference type="eggNOG" id="COG0502">
    <property type="taxonomic scope" value="Bacteria"/>
</dbReference>
<dbReference type="HOGENOM" id="CLU_033172_2_1_3"/>
<dbReference type="UniPathway" id="UPA00078">
    <property type="reaction ID" value="UER00162"/>
</dbReference>
<dbReference type="Proteomes" id="UP000001688">
    <property type="component" value="Chromosome"/>
</dbReference>
<dbReference type="GO" id="GO:0051537">
    <property type="term" value="F:2 iron, 2 sulfur cluster binding"/>
    <property type="evidence" value="ECO:0007669"/>
    <property type="project" value="UniProtKB-KW"/>
</dbReference>
<dbReference type="GO" id="GO:0051539">
    <property type="term" value="F:4 iron, 4 sulfur cluster binding"/>
    <property type="evidence" value="ECO:0007669"/>
    <property type="project" value="UniProtKB-KW"/>
</dbReference>
<dbReference type="GO" id="GO:0004076">
    <property type="term" value="F:biotin synthase activity"/>
    <property type="evidence" value="ECO:0007669"/>
    <property type="project" value="UniProtKB-UniRule"/>
</dbReference>
<dbReference type="GO" id="GO:0005506">
    <property type="term" value="F:iron ion binding"/>
    <property type="evidence" value="ECO:0007669"/>
    <property type="project" value="UniProtKB-UniRule"/>
</dbReference>
<dbReference type="GO" id="GO:0009102">
    <property type="term" value="P:biotin biosynthetic process"/>
    <property type="evidence" value="ECO:0007669"/>
    <property type="project" value="UniProtKB-UniRule"/>
</dbReference>
<dbReference type="CDD" id="cd01335">
    <property type="entry name" value="Radical_SAM"/>
    <property type="match status" value="1"/>
</dbReference>
<dbReference type="FunFam" id="3.20.20.70:FF:000026">
    <property type="entry name" value="Biotin synthase"/>
    <property type="match status" value="1"/>
</dbReference>
<dbReference type="Gene3D" id="3.20.20.70">
    <property type="entry name" value="Aldolase class I"/>
    <property type="match status" value="1"/>
</dbReference>
<dbReference type="HAMAP" id="MF_01694">
    <property type="entry name" value="BioB"/>
    <property type="match status" value="1"/>
</dbReference>
<dbReference type="InterPro" id="IPR013785">
    <property type="entry name" value="Aldolase_TIM"/>
</dbReference>
<dbReference type="InterPro" id="IPR010722">
    <property type="entry name" value="BATS_dom"/>
</dbReference>
<dbReference type="InterPro" id="IPR002684">
    <property type="entry name" value="Biotin_synth/BioAB"/>
</dbReference>
<dbReference type="InterPro" id="IPR024177">
    <property type="entry name" value="Biotin_synthase"/>
</dbReference>
<dbReference type="InterPro" id="IPR006638">
    <property type="entry name" value="Elp3/MiaA/NifB-like_rSAM"/>
</dbReference>
<dbReference type="InterPro" id="IPR007197">
    <property type="entry name" value="rSAM"/>
</dbReference>
<dbReference type="NCBIfam" id="TIGR00433">
    <property type="entry name" value="bioB"/>
    <property type="match status" value="1"/>
</dbReference>
<dbReference type="PANTHER" id="PTHR22976">
    <property type="entry name" value="BIOTIN SYNTHASE"/>
    <property type="match status" value="1"/>
</dbReference>
<dbReference type="PANTHER" id="PTHR22976:SF2">
    <property type="entry name" value="BIOTIN SYNTHASE, MITOCHONDRIAL"/>
    <property type="match status" value="1"/>
</dbReference>
<dbReference type="Pfam" id="PF06968">
    <property type="entry name" value="BATS"/>
    <property type="match status" value="1"/>
</dbReference>
<dbReference type="Pfam" id="PF04055">
    <property type="entry name" value="Radical_SAM"/>
    <property type="match status" value="1"/>
</dbReference>
<dbReference type="PIRSF" id="PIRSF001619">
    <property type="entry name" value="Biotin_synth"/>
    <property type="match status" value="1"/>
</dbReference>
<dbReference type="SFLD" id="SFLDG01060">
    <property type="entry name" value="BATS_domain_containing"/>
    <property type="match status" value="1"/>
</dbReference>
<dbReference type="SFLD" id="SFLDG01278">
    <property type="entry name" value="biotin_synthase_like"/>
    <property type="match status" value="1"/>
</dbReference>
<dbReference type="SMART" id="SM00876">
    <property type="entry name" value="BATS"/>
    <property type="match status" value="1"/>
</dbReference>
<dbReference type="SMART" id="SM00729">
    <property type="entry name" value="Elp3"/>
    <property type="match status" value="1"/>
</dbReference>
<dbReference type="SUPFAM" id="SSF102114">
    <property type="entry name" value="Radical SAM enzymes"/>
    <property type="match status" value="1"/>
</dbReference>
<dbReference type="PROSITE" id="PS51918">
    <property type="entry name" value="RADICAL_SAM"/>
    <property type="match status" value="1"/>
</dbReference>
<protein>
    <recommendedName>
        <fullName evidence="1">Biotin synthase</fullName>
        <ecNumber evidence="1">2.8.1.6</ecNumber>
    </recommendedName>
</protein>
<reference key="1">
    <citation type="submission" date="2008-02" db="EMBL/GenBank/DDBJ databases">
        <title>Complete sequence of Synechococcus sp. PCC 7002.</title>
        <authorList>
            <person name="Li T."/>
            <person name="Zhao J."/>
            <person name="Zhao C."/>
            <person name="Liu Z."/>
            <person name="Zhao F."/>
            <person name="Marquardt J."/>
            <person name="Nomura C.T."/>
            <person name="Persson S."/>
            <person name="Detter J.C."/>
            <person name="Richardson P.M."/>
            <person name="Lanz C."/>
            <person name="Schuster S.C."/>
            <person name="Wang J."/>
            <person name="Li S."/>
            <person name="Huang X."/>
            <person name="Cai T."/>
            <person name="Yu Z."/>
            <person name="Luo J."/>
            <person name="Zhao J."/>
            <person name="Bryant D.A."/>
        </authorList>
    </citation>
    <scope>NUCLEOTIDE SEQUENCE [LARGE SCALE GENOMIC DNA]</scope>
    <source>
        <strain>ATCC 27264 / PCC 7002 / PR-6</strain>
    </source>
</reference>
<keyword id="KW-0001">2Fe-2S</keyword>
<keyword id="KW-0004">4Fe-4S</keyword>
<keyword id="KW-0093">Biotin biosynthesis</keyword>
<keyword id="KW-0408">Iron</keyword>
<keyword id="KW-0411">Iron-sulfur</keyword>
<keyword id="KW-0479">Metal-binding</keyword>
<keyword id="KW-1185">Reference proteome</keyword>
<keyword id="KW-0949">S-adenosyl-L-methionine</keyword>
<keyword id="KW-0808">Transferase</keyword>
<evidence type="ECO:0000255" key="1">
    <source>
        <dbReference type="HAMAP-Rule" id="MF_01694"/>
    </source>
</evidence>
<evidence type="ECO:0000255" key="2">
    <source>
        <dbReference type="PROSITE-ProRule" id="PRU01266"/>
    </source>
</evidence>
<proteinExistence type="inferred from homology"/>